<gene>
    <name type="primary">UBXN1</name>
    <name type="synonym">SAKS1</name>
</gene>
<dbReference type="EMBL" id="BC109898">
    <property type="protein sequence ID" value="AAI09899.1"/>
    <property type="molecule type" value="mRNA"/>
</dbReference>
<dbReference type="RefSeq" id="NP_001032677.1">
    <property type="nucleotide sequence ID" value="NM_001037588.2"/>
</dbReference>
<dbReference type="SMR" id="Q32KW2"/>
<dbReference type="FunCoup" id="Q32KW2">
    <property type="interactions" value="3209"/>
</dbReference>
<dbReference type="STRING" id="9913.ENSBTAP00000013845"/>
<dbReference type="PaxDb" id="9913-ENSBTAP00000013845"/>
<dbReference type="Ensembl" id="ENSBTAT00000013845.4">
    <property type="protein sequence ID" value="ENSBTAP00000013845.2"/>
    <property type="gene ID" value="ENSBTAG00000010481.5"/>
</dbReference>
<dbReference type="GeneID" id="506676"/>
<dbReference type="KEGG" id="bta:506676"/>
<dbReference type="CTD" id="51035"/>
<dbReference type="VEuPathDB" id="HostDB:ENSBTAG00000010481"/>
<dbReference type="VGNC" id="VGNC:36622">
    <property type="gene designation" value="UBXN1"/>
</dbReference>
<dbReference type="eggNOG" id="KOG2689">
    <property type="taxonomic scope" value="Eukaryota"/>
</dbReference>
<dbReference type="GeneTree" id="ENSGT00940000156457"/>
<dbReference type="HOGENOM" id="CLU_047594_1_0_1"/>
<dbReference type="InParanoid" id="Q32KW2"/>
<dbReference type="OMA" id="AQHFPRK"/>
<dbReference type="OrthoDB" id="10254930at2759"/>
<dbReference type="TreeFam" id="TF313944"/>
<dbReference type="Reactome" id="R-BTA-532668">
    <property type="pathway name" value="N-glycan trimming in the ER and Calnexin/Calreticulin cycle"/>
</dbReference>
<dbReference type="Reactome" id="R-BTA-5693565">
    <property type="pathway name" value="Recruitment and ATM-mediated phosphorylation of repair and signaling proteins at DNA double strand breaks"/>
</dbReference>
<dbReference type="Proteomes" id="UP000009136">
    <property type="component" value="Chromosome 29"/>
</dbReference>
<dbReference type="Bgee" id="ENSBTAG00000010481">
    <property type="expression patterns" value="Expressed in biceps femoris and 107 other cell types or tissues"/>
</dbReference>
<dbReference type="GO" id="GO:0005737">
    <property type="term" value="C:cytoplasm"/>
    <property type="evidence" value="ECO:0000318"/>
    <property type="project" value="GO_Central"/>
</dbReference>
<dbReference type="GO" id="GO:0005829">
    <property type="term" value="C:cytosol"/>
    <property type="evidence" value="ECO:0007669"/>
    <property type="project" value="Ensembl"/>
</dbReference>
<dbReference type="GO" id="GO:0005654">
    <property type="term" value="C:nucleoplasm"/>
    <property type="evidence" value="ECO:0007669"/>
    <property type="project" value="Ensembl"/>
</dbReference>
<dbReference type="GO" id="GO:0005634">
    <property type="term" value="C:nucleus"/>
    <property type="evidence" value="ECO:0000318"/>
    <property type="project" value="GO_Central"/>
</dbReference>
<dbReference type="GO" id="GO:0034098">
    <property type="term" value="C:VCP-NPL4-UFD1 AAA ATPase complex"/>
    <property type="evidence" value="ECO:0007669"/>
    <property type="project" value="Ensembl"/>
</dbReference>
<dbReference type="GO" id="GO:0051117">
    <property type="term" value="F:ATPase binding"/>
    <property type="evidence" value="ECO:0007669"/>
    <property type="project" value="Ensembl"/>
</dbReference>
<dbReference type="GO" id="GO:0036435">
    <property type="term" value="F:K48-linked polyubiquitin modification-dependent protein binding"/>
    <property type="evidence" value="ECO:0000318"/>
    <property type="project" value="GO_Central"/>
</dbReference>
<dbReference type="GO" id="GO:0071796">
    <property type="term" value="F:K6-linked polyubiquitin modification-dependent protein binding"/>
    <property type="evidence" value="ECO:0000250"/>
    <property type="project" value="UniProtKB"/>
</dbReference>
<dbReference type="GO" id="GO:1904855">
    <property type="term" value="F:proteasome regulatory particle binding"/>
    <property type="evidence" value="ECO:0007669"/>
    <property type="project" value="Ensembl"/>
</dbReference>
<dbReference type="GO" id="GO:0043130">
    <property type="term" value="F:ubiquitin binding"/>
    <property type="evidence" value="ECO:0007669"/>
    <property type="project" value="Ensembl"/>
</dbReference>
<dbReference type="GO" id="GO:0031625">
    <property type="term" value="F:ubiquitin protein ligase binding"/>
    <property type="evidence" value="ECO:0007669"/>
    <property type="project" value="Ensembl"/>
</dbReference>
<dbReference type="GO" id="GO:1904293">
    <property type="term" value="P:negative regulation of ERAD pathway"/>
    <property type="evidence" value="ECO:0007669"/>
    <property type="project" value="Ensembl"/>
</dbReference>
<dbReference type="GO" id="GO:0032435">
    <property type="term" value="P:negative regulation of proteasomal ubiquitin-dependent protein catabolic process"/>
    <property type="evidence" value="ECO:0000250"/>
    <property type="project" value="UniProtKB"/>
</dbReference>
<dbReference type="GO" id="GO:1903094">
    <property type="term" value="P:negative regulation of protein K48-linked deubiquitination"/>
    <property type="evidence" value="ECO:0000318"/>
    <property type="project" value="GO_Central"/>
</dbReference>
<dbReference type="GO" id="GO:0031397">
    <property type="term" value="P:negative regulation of protein ubiquitination"/>
    <property type="evidence" value="ECO:0000250"/>
    <property type="project" value="UniProtKB"/>
</dbReference>
<dbReference type="CDD" id="cd14302">
    <property type="entry name" value="UBA_UBXN1"/>
    <property type="match status" value="1"/>
</dbReference>
<dbReference type="CDD" id="cd01772">
    <property type="entry name" value="UBX_UBXN1"/>
    <property type="match status" value="1"/>
</dbReference>
<dbReference type="FunFam" id="1.10.8.10:FF:000044">
    <property type="entry name" value="UBX domain-containing protein 1"/>
    <property type="match status" value="1"/>
</dbReference>
<dbReference type="FunFam" id="3.10.20.90:FF:000134">
    <property type="entry name" value="UBX domain-containing protein 1"/>
    <property type="match status" value="1"/>
</dbReference>
<dbReference type="Gene3D" id="1.10.8.10">
    <property type="entry name" value="DNA helicase RuvA subunit, C-terminal domain"/>
    <property type="match status" value="2"/>
</dbReference>
<dbReference type="Gene3D" id="3.10.20.90">
    <property type="entry name" value="Phosphatidylinositol 3-kinase Catalytic Subunit, Chain A, domain 1"/>
    <property type="match status" value="1"/>
</dbReference>
<dbReference type="InterPro" id="IPR015940">
    <property type="entry name" value="UBA"/>
</dbReference>
<dbReference type="InterPro" id="IPR009060">
    <property type="entry name" value="UBA-like_sf"/>
</dbReference>
<dbReference type="InterPro" id="IPR041923">
    <property type="entry name" value="UBA_UBXN1"/>
</dbReference>
<dbReference type="InterPro" id="IPR029071">
    <property type="entry name" value="Ubiquitin-like_domsf"/>
</dbReference>
<dbReference type="InterPro" id="IPR001012">
    <property type="entry name" value="UBX_dom"/>
</dbReference>
<dbReference type="PANTHER" id="PTHR46340">
    <property type="entry name" value="UBX DOMAIN-CONTAINING PROTEIN 1"/>
    <property type="match status" value="1"/>
</dbReference>
<dbReference type="PANTHER" id="PTHR46340:SF1">
    <property type="entry name" value="UBX DOMAIN-CONTAINING PROTEIN 1"/>
    <property type="match status" value="1"/>
</dbReference>
<dbReference type="Pfam" id="PF22562">
    <property type="entry name" value="UBA_7"/>
    <property type="match status" value="1"/>
</dbReference>
<dbReference type="Pfam" id="PF00789">
    <property type="entry name" value="UBX"/>
    <property type="match status" value="1"/>
</dbReference>
<dbReference type="SMART" id="SM00165">
    <property type="entry name" value="UBA"/>
    <property type="match status" value="1"/>
</dbReference>
<dbReference type="SMART" id="SM00166">
    <property type="entry name" value="UBX"/>
    <property type="match status" value="1"/>
</dbReference>
<dbReference type="SUPFAM" id="SSF46934">
    <property type="entry name" value="UBA-like"/>
    <property type="match status" value="1"/>
</dbReference>
<dbReference type="SUPFAM" id="SSF54236">
    <property type="entry name" value="Ubiquitin-like"/>
    <property type="match status" value="1"/>
</dbReference>
<dbReference type="PROSITE" id="PS50030">
    <property type="entry name" value="UBA"/>
    <property type="match status" value="1"/>
</dbReference>
<dbReference type="PROSITE" id="PS50033">
    <property type="entry name" value="UBX"/>
    <property type="match status" value="1"/>
</dbReference>
<comment type="function">
    <text evidence="1">Ubiquitin-binding protein that interacts with the BRCA1-BARD1 heterodimer, and regulates its activity. Specifically binds 'Lys-6'-linked polyubiquitin chains. Interaction with autoubiquitinated BRCA1, leads to inhibit the E3 ubiquitin-protein ligase activity of the BRCA1-BARD1 heterodimer. Component of a complex required to couple deglycosylation and proteasome-mediated degradation of misfolded proteins in the endoplasmic reticulum that are retrotranslocated in the cytosol (By similarity).</text>
</comment>
<comment type="subunit">
    <text evidence="1">Component of a complex required to couple retrotranslocation, ubiquitination and deglycosylation composed of NGLY1, SAKS1, AMFR, VCP and RAD23B. Interacts with HOMER2 (By similarity). Interacts directly with VCP. Interacts with BRCA1 and BARD1; interaction takes place when BRCA1 is not autoubiquitinated bur is strongly enhanced in the presence of autoubiquitinated BRCA1 (By similarity).</text>
</comment>
<comment type="subcellular location">
    <subcellularLocation>
        <location evidence="1">Cytoplasm</location>
    </subcellularLocation>
</comment>
<comment type="domain">
    <text evidence="1">The UBA domain specifically recognizes and binds 'Lys-6'-linked polyubiquitin chains.</text>
</comment>
<evidence type="ECO:0000250" key="1"/>
<evidence type="ECO:0000250" key="2">
    <source>
        <dbReference type="UniProtKB" id="Q04323"/>
    </source>
</evidence>
<evidence type="ECO:0000255" key="3"/>
<evidence type="ECO:0000255" key="4">
    <source>
        <dbReference type="PROSITE-ProRule" id="PRU00212"/>
    </source>
</evidence>
<evidence type="ECO:0000255" key="5">
    <source>
        <dbReference type="PROSITE-ProRule" id="PRU00215"/>
    </source>
</evidence>
<evidence type="ECO:0000256" key="6">
    <source>
        <dbReference type="SAM" id="MobiDB-lite"/>
    </source>
</evidence>
<accession>Q32KW2</accession>
<keyword id="KW-0007">Acetylation</keyword>
<keyword id="KW-0175">Coiled coil</keyword>
<keyword id="KW-0963">Cytoplasm</keyword>
<keyword id="KW-0597">Phosphoprotein</keyword>
<keyword id="KW-1185">Reference proteome</keyword>
<name>UBXN1_BOVIN</name>
<feature type="initiator methionine" description="Removed" evidence="2">
    <location>
        <position position="1"/>
    </location>
</feature>
<feature type="chain" id="PRO_0000248997" description="UBX domain-containing protein 1">
    <location>
        <begin position="2"/>
        <end position="297"/>
    </location>
</feature>
<feature type="domain" description="UBA" evidence="4">
    <location>
        <begin position="2"/>
        <end position="42"/>
    </location>
</feature>
<feature type="domain" description="UBX" evidence="5">
    <location>
        <begin position="209"/>
        <end position="291"/>
    </location>
</feature>
<feature type="region of interest" description="Disordered" evidence="6">
    <location>
        <begin position="40"/>
        <end position="210"/>
    </location>
</feature>
<feature type="region of interest" description="Interaction with BRCA1" evidence="1">
    <location>
        <begin position="43"/>
        <end position="297"/>
    </location>
</feature>
<feature type="coiled-coil region" evidence="3">
    <location>
        <begin position="86"/>
        <end position="176"/>
    </location>
</feature>
<feature type="compositionally biased region" description="Basic and acidic residues" evidence="6">
    <location>
        <begin position="86"/>
        <end position="122"/>
    </location>
</feature>
<feature type="compositionally biased region" description="Basic and acidic residues" evidence="6">
    <location>
        <begin position="137"/>
        <end position="177"/>
    </location>
</feature>
<feature type="compositionally biased region" description="Pro residues" evidence="6">
    <location>
        <begin position="187"/>
        <end position="199"/>
    </location>
</feature>
<feature type="modified residue" description="N-acetylalanine" evidence="2">
    <location>
        <position position="2"/>
    </location>
</feature>
<feature type="modified residue" description="Phosphoserine" evidence="2">
    <location>
        <position position="199"/>
    </location>
</feature>
<feature type="modified residue" description="Phosphoserine; by MAPK12" evidence="2">
    <location>
        <position position="200"/>
    </location>
</feature>
<feature type="modified residue" description="Phosphothreonine" evidence="2">
    <location>
        <position position="207"/>
    </location>
</feature>
<feature type="modified residue" description="Phosphothreonine" evidence="2">
    <location>
        <position position="229"/>
    </location>
</feature>
<feature type="modified residue" description="Phosphoserine" evidence="2">
    <location>
        <position position="270"/>
    </location>
</feature>
<protein>
    <recommendedName>
        <fullName>UBX domain-containing protein 1</fullName>
    </recommendedName>
    <alternativeName>
        <fullName>SAPK substrate protein 1</fullName>
    </alternativeName>
</protein>
<reference key="1">
    <citation type="submission" date="2005-11" db="EMBL/GenBank/DDBJ databases">
        <authorList>
            <consortium name="NIH - Mammalian Gene Collection (MGC) project"/>
        </authorList>
    </citation>
    <scope>NUCLEOTIDE SEQUENCE [LARGE SCALE MRNA]</scope>
    <source>
        <strain>Crossbred X Angus</strain>
        <tissue>Liver</tissue>
    </source>
</reference>
<proteinExistence type="evidence at transcript level"/>
<organism>
    <name type="scientific">Bos taurus</name>
    <name type="common">Bovine</name>
    <dbReference type="NCBI Taxonomy" id="9913"/>
    <lineage>
        <taxon>Eukaryota</taxon>
        <taxon>Metazoa</taxon>
        <taxon>Chordata</taxon>
        <taxon>Craniata</taxon>
        <taxon>Vertebrata</taxon>
        <taxon>Euteleostomi</taxon>
        <taxon>Mammalia</taxon>
        <taxon>Eutheria</taxon>
        <taxon>Laurasiatheria</taxon>
        <taxon>Artiodactyla</taxon>
        <taxon>Ruminantia</taxon>
        <taxon>Pecora</taxon>
        <taxon>Bovidae</taxon>
        <taxon>Bovinae</taxon>
        <taxon>Bos</taxon>
    </lineage>
</organism>
<sequence length="297" mass="33402">MAELTALESLIEMGFPKGRAEKALALTGNQGIEAAMDWLMEHEDDPDVDEPLATPLGHVLGREPTPSEQGGPKGPGSAVGEGKPVLTEEERQEQTKRMLELVAQKQREREEREEREALERERQRRRQGQELTAARQRLQEDEMRRAAEERRREKAEELEARQRVREKIERDKAERAKKYGGNVGSQPSPPATEPGPVPSSPSREPPTKREYDQCRIQVRLPDGTSLTQTFRAREQLAAVRLYVELHRGEELGGAQDPVQLLSGFPRRAFSEADMERPLQELGLVPSAVLIVAKKCPG</sequence>